<comment type="function">
    <text evidence="2">Involved in lignin biosynthesis. Catalyzes the final step specific for the production of lignin monomers. Catalyzes the NADPH-dependent reduction of coniferaldehyde, 5-hydroxyconiferaldehyde, sinapaldehyde, 4-coumaraldehyde and caffeyl aldehyde to their respective alcohols.</text>
</comment>
<comment type="catalytic activity">
    <reaction evidence="2">
        <text>(E)-cinnamyl alcohol + NADP(+) = (E)-cinnamaldehyde + NADPH + H(+)</text>
        <dbReference type="Rhea" id="RHEA:10392"/>
        <dbReference type="ChEBI" id="CHEBI:15378"/>
        <dbReference type="ChEBI" id="CHEBI:16731"/>
        <dbReference type="ChEBI" id="CHEBI:33227"/>
        <dbReference type="ChEBI" id="CHEBI:57783"/>
        <dbReference type="ChEBI" id="CHEBI:58349"/>
        <dbReference type="EC" id="1.1.1.195"/>
    </reaction>
    <physiologicalReaction direction="right-to-left" evidence="2">
        <dbReference type="Rhea" id="RHEA:10394"/>
    </physiologicalReaction>
</comment>
<comment type="catalytic activity">
    <reaction evidence="2">
        <text>(E)-coniferol + NADP(+) = (E)-coniferaldehyde + NADPH + H(+)</text>
        <dbReference type="Rhea" id="RHEA:22444"/>
        <dbReference type="ChEBI" id="CHEBI:15378"/>
        <dbReference type="ChEBI" id="CHEBI:16547"/>
        <dbReference type="ChEBI" id="CHEBI:17745"/>
        <dbReference type="ChEBI" id="CHEBI:57783"/>
        <dbReference type="ChEBI" id="CHEBI:58349"/>
        <dbReference type="EC" id="1.1.1.195"/>
    </reaction>
    <physiologicalReaction direction="right-to-left" evidence="2">
        <dbReference type="Rhea" id="RHEA:22446"/>
    </physiologicalReaction>
</comment>
<comment type="catalytic activity">
    <reaction evidence="2">
        <text>(E)-sinapyl alcohol + NADP(+) = (E)-sinapaldehyde + NADPH + H(+)</text>
        <dbReference type="Rhea" id="RHEA:45704"/>
        <dbReference type="ChEBI" id="CHEBI:15378"/>
        <dbReference type="ChEBI" id="CHEBI:27949"/>
        <dbReference type="ChEBI" id="CHEBI:57783"/>
        <dbReference type="ChEBI" id="CHEBI:58349"/>
        <dbReference type="ChEBI" id="CHEBI:64557"/>
        <dbReference type="EC" id="1.1.1.195"/>
    </reaction>
    <physiologicalReaction direction="right-to-left" evidence="2">
        <dbReference type="Rhea" id="RHEA:45706"/>
    </physiologicalReaction>
</comment>
<comment type="catalytic activity">
    <reaction evidence="2">
        <text>(E)-4-coumaroyl alcohol + NADP(+) = (E)-4-coumaraldehyde + NADPH + H(+)</text>
        <dbReference type="Rhea" id="RHEA:45724"/>
        <dbReference type="ChEBI" id="CHEBI:15378"/>
        <dbReference type="ChEBI" id="CHEBI:28353"/>
        <dbReference type="ChEBI" id="CHEBI:57783"/>
        <dbReference type="ChEBI" id="CHEBI:58349"/>
        <dbReference type="ChEBI" id="CHEBI:64555"/>
        <dbReference type="EC" id="1.1.1.195"/>
    </reaction>
    <physiologicalReaction direction="right-to-left" evidence="2">
        <dbReference type="Rhea" id="RHEA:45726"/>
    </physiologicalReaction>
</comment>
<comment type="catalytic activity">
    <reaction evidence="2">
        <text>(E)-caffeyl alcohol + NADP(+) = (E)-caffeyl aldehyde + NADPH + H(+)</text>
        <dbReference type="Rhea" id="RHEA:45728"/>
        <dbReference type="ChEBI" id="CHEBI:15378"/>
        <dbReference type="ChEBI" id="CHEBI:28323"/>
        <dbReference type="ChEBI" id="CHEBI:31334"/>
        <dbReference type="ChEBI" id="CHEBI:57783"/>
        <dbReference type="ChEBI" id="CHEBI:58349"/>
    </reaction>
    <physiologicalReaction direction="right-to-left" evidence="2">
        <dbReference type="Rhea" id="RHEA:45730"/>
    </physiologicalReaction>
</comment>
<comment type="cofactor">
    <cofactor evidence="1">
        <name>Zn(2+)</name>
        <dbReference type="ChEBI" id="CHEBI:29105"/>
    </cofactor>
    <text evidence="1">Binds 2 Zn(2+) ions per subunit.</text>
</comment>
<comment type="biophysicochemical properties">
    <kinetics>
        <KM evidence="2">292 uM for 4-coumaraldehyde (at pH 6.25 and 40 degrees Celsius)</KM>
        <KM evidence="2">581 uM for caffeyl aldehyde (at pH 6.25 and 40 degrees Celsius)</KM>
        <KM evidence="2">362 uM for coniferaldehyde (at pH 6.25 and 40 degrees Celsius)</KM>
        <KM evidence="2">534 uM for 5-hydroxyconiferaldehyde (at pH 6.25 and 37 degrees Celsius)</KM>
        <KM evidence="2">629 uM for sinapaldehyde (at pH 6.25 and 40 degrees Celsius)</KM>
        <Vmax evidence="2">20.1 pmol/sec/ug enzyme with 4-coumaraldehyde as substrate (at pH 6.25 and 40 degrees Celsius)</Vmax>
        <Vmax evidence="2">9.7 pmol/sec/ug enzyme with caffeyl aldehyde as substrate (at pH 6.25 and 40 degrees Celsius)</Vmax>
        <Vmax evidence="2">4.8 pmol/sec/ug enzyme with coniferaldehyde as substrate (at pH 6.25 and 40 degrees Celsius)</Vmax>
        <Vmax evidence="2">17.9 pmol/sec/ug enzyme with 5-hydroxyconiferaldehyde as substrate (at pH 6.25 and 37 degrees Celsius)</Vmax>
        <Vmax evidence="2">9.1 pmol/sec/ug enzyme with sinapaldehyde as substrate (at pH 6.25 and 40 degrees Celsius)</Vmax>
    </kinetics>
</comment>
<comment type="pathway">
    <text evidence="7">Aromatic compound metabolism; phenylpropanoid biosynthesis.</text>
</comment>
<comment type="subunit">
    <text evidence="1">Homodimer.</text>
</comment>
<comment type="tissue specificity">
    <text evidence="3 4">Expressed in the root tips. Expressed in the apical meristematic regions, leaf veins and at the base of the trichomes. Expressed at the base of the stems. Expressed in the abscission zones of newly formed siliques.</text>
</comment>
<comment type="similarity">
    <text evidence="7">Belongs to the zinc-containing alcohol dehydrogenase family.</text>
</comment>
<feature type="chain" id="PRO_0000382638" description="Cinnamyl alcohol dehydrogenase 3">
    <location>
        <begin position="1"/>
        <end position="375"/>
    </location>
</feature>
<feature type="binding site" evidence="1">
    <location>
        <position position="44"/>
    </location>
    <ligand>
        <name>Zn(2+)</name>
        <dbReference type="ChEBI" id="CHEBI:29105"/>
        <label>1</label>
        <note>catalytic</note>
    </ligand>
</feature>
<feature type="binding site" evidence="1">
    <location>
        <position position="46"/>
    </location>
    <ligand>
        <name>NADP(+)</name>
        <dbReference type="ChEBI" id="CHEBI:58349"/>
    </ligand>
</feature>
<feature type="binding site" evidence="1">
    <location>
        <position position="66"/>
    </location>
    <ligand>
        <name>Zn(2+)</name>
        <dbReference type="ChEBI" id="CHEBI:29105"/>
        <label>1</label>
        <note>catalytic</note>
    </ligand>
</feature>
<feature type="binding site" evidence="1">
    <location>
        <position position="67"/>
    </location>
    <ligand>
        <name>Zn(2+)</name>
        <dbReference type="ChEBI" id="CHEBI:29105"/>
        <label>1</label>
        <note>catalytic</note>
    </ligand>
</feature>
<feature type="binding site" evidence="1">
    <location>
        <position position="97"/>
    </location>
    <ligand>
        <name>Zn(2+)</name>
        <dbReference type="ChEBI" id="CHEBI:29105"/>
        <label>2</label>
    </ligand>
</feature>
<feature type="binding site" evidence="1">
    <location>
        <position position="100"/>
    </location>
    <ligand>
        <name>Zn(2+)</name>
        <dbReference type="ChEBI" id="CHEBI:29105"/>
        <label>2</label>
    </ligand>
</feature>
<feature type="binding site" evidence="1">
    <location>
        <position position="103"/>
    </location>
    <ligand>
        <name>Zn(2+)</name>
        <dbReference type="ChEBI" id="CHEBI:29105"/>
        <label>2</label>
    </ligand>
</feature>
<feature type="binding site" evidence="1">
    <location>
        <position position="111"/>
    </location>
    <ligand>
        <name>Zn(2+)</name>
        <dbReference type="ChEBI" id="CHEBI:29105"/>
        <label>2</label>
    </ligand>
</feature>
<feature type="binding site" evidence="1">
    <location>
        <position position="160"/>
    </location>
    <ligand>
        <name>Zn(2+)</name>
        <dbReference type="ChEBI" id="CHEBI:29105"/>
        <label>1</label>
        <note>catalytic</note>
    </ligand>
</feature>
<feature type="binding site" evidence="1">
    <location>
        <position position="164"/>
    </location>
    <ligand>
        <name>NADP(+)</name>
        <dbReference type="ChEBI" id="CHEBI:58349"/>
    </ligand>
</feature>
<feature type="binding site" evidence="1">
    <location>
        <begin position="186"/>
        <end position="191"/>
    </location>
    <ligand>
        <name>NADP(+)</name>
        <dbReference type="ChEBI" id="CHEBI:58349"/>
    </ligand>
</feature>
<feature type="binding site" evidence="1">
    <location>
        <begin position="209"/>
        <end position="214"/>
    </location>
    <ligand>
        <name>NADP(+)</name>
        <dbReference type="ChEBI" id="CHEBI:58349"/>
    </ligand>
</feature>
<feature type="binding site" evidence="1">
    <location>
        <position position="249"/>
    </location>
    <ligand>
        <name>NADP(+)</name>
        <dbReference type="ChEBI" id="CHEBI:58349"/>
    </ligand>
</feature>
<feature type="binding site" evidence="1">
    <location>
        <position position="273"/>
    </location>
    <ligand>
        <name>NADP(+)</name>
        <dbReference type="ChEBI" id="CHEBI:58349"/>
    </ligand>
</feature>
<feature type="binding site" evidence="1">
    <location>
        <begin position="296"/>
        <end position="298"/>
    </location>
    <ligand>
        <name>NADP(+)</name>
        <dbReference type="ChEBI" id="CHEBI:58349"/>
    </ligand>
</feature>
<accession>Q9SJ10</accession>
<keyword id="KW-0438">Lignin biosynthesis</keyword>
<keyword id="KW-0479">Metal-binding</keyword>
<keyword id="KW-0521">NADP</keyword>
<keyword id="KW-0560">Oxidoreductase</keyword>
<keyword id="KW-1185">Reference proteome</keyword>
<keyword id="KW-0862">Zinc</keyword>
<sequence>MVDQNRAFGWAANDESGVLSPFHFSRRENGENDVTVKILFCGVCHSDLHTIKNHWGFSRYPIIPGHEIVGIATKVGKNVTKFKEGDRVGVGVIIGSCQSCESCNQDLENYCPKVVFTYNSRSSDGTRNQGGYSDVIVVDHRFVLSIPDGLPSDSGAPLLCAGITVYSPMKYYGMTKESGKRLGVNGLGGLGHIAVKIGKAFGLRVTVISRSSEKEREAIDRLGADSFLVTTDSQKMKEAVGTMDFIIDTVSAEHALLPLFSLLKVSGKLVALGLLEKPLDLPIFPLVLGRKMVGGSQIGGMKETQEMLEFCAKHKIVSDIELIKMSDINSAMDRLVKSDVRYRFVIDVANSLLPESSAEILTEHVDHGVSITSRF</sequence>
<organism>
    <name type="scientific">Arabidopsis thaliana</name>
    <name type="common">Mouse-ear cress</name>
    <dbReference type="NCBI Taxonomy" id="3702"/>
    <lineage>
        <taxon>Eukaryota</taxon>
        <taxon>Viridiplantae</taxon>
        <taxon>Streptophyta</taxon>
        <taxon>Embryophyta</taxon>
        <taxon>Tracheophyta</taxon>
        <taxon>Spermatophyta</taxon>
        <taxon>Magnoliopsida</taxon>
        <taxon>eudicotyledons</taxon>
        <taxon>Gunneridae</taxon>
        <taxon>Pentapetalae</taxon>
        <taxon>rosids</taxon>
        <taxon>malvids</taxon>
        <taxon>Brassicales</taxon>
        <taxon>Brassicaceae</taxon>
        <taxon>Camelineae</taxon>
        <taxon>Arabidopsis</taxon>
    </lineage>
</organism>
<gene>
    <name evidence="5" type="primary">CAD3</name>
    <name evidence="6" type="synonym">CAD8</name>
    <name evidence="6" type="synonym">CADF</name>
    <name evidence="6" type="synonym">LCAD-F</name>
    <name evidence="8" type="ordered locus">At2g21890</name>
    <name evidence="9" type="ORF">F7D8.21</name>
</gene>
<protein>
    <recommendedName>
        <fullName evidence="5">Cinnamyl alcohol dehydrogenase 3</fullName>
        <shortName evidence="5">AtCAD3</shortName>
        <ecNumber evidence="2">1.1.1.195</ecNumber>
    </recommendedName>
</protein>
<reference key="1">
    <citation type="journal article" date="2004" name="Proc. Natl. Acad. Sci. U.S.A.">
        <title>Functional reclassification of the putative cinnamyl alcohol dehydrogenase multigene family in Arabidopsis.</title>
        <authorList>
            <person name="Kim S.-J."/>
            <person name="Kim M.-R."/>
            <person name="Bedgar D.L."/>
            <person name="Moinuddin S.G.A."/>
            <person name="Cardenas C.L."/>
            <person name="Davin L.B."/>
            <person name="Kang C."/>
            <person name="Lewis N.G."/>
        </authorList>
    </citation>
    <scope>NUCLEOTIDE SEQUENCE [MRNA]</scope>
    <scope>FUNCTION</scope>
    <scope>CATALYTIC ACTIVITY</scope>
    <scope>BIOPHYSICOCHEMICAL PROPERTIES</scope>
    <scope>GENE FAMILY</scope>
    <scope>NOMENCLATURE</scope>
</reference>
<reference key="2">
    <citation type="journal article" date="1999" name="Nature">
        <title>Sequence and analysis of chromosome 2 of the plant Arabidopsis thaliana.</title>
        <authorList>
            <person name="Lin X."/>
            <person name="Kaul S."/>
            <person name="Rounsley S.D."/>
            <person name="Shea T.P."/>
            <person name="Benito M.-I."/>
            <person name="Town C.D."/>
            <person name="Fujii C.Y."/>
            <person name="Mason T.M."/>
            <person name="Bowman C.L."/>
            <person name="Barnstead M.E."/>
            <person name="Feldblyum T.V."/>
            <person name="Buell C.R."/>
            <person name="Ketchum K.A."/>
            <person name="Lee J.J."/>
            <person name="Ronning C.M."/>
            <person name="Koo H.L."/>
            <person name="Moffat K.S."/>
            <person name="Cronin L.A."/>
            <person name="Shen M."/>
            <person name="Pai G."/>
            <person name="Van Aken S."/>
            <person name="Umayam L."/>
            <person name="Tallon L.J."/>
            <person name="Gill J.E."/>
            <person name="Adams M.D."/>
            <person name="Carrera A.J."/>
            <person name="Creasy T.H."/>
            <person name="Goodman H.M."/>
            <person name="Somerville C.R."/>
            <person name="Copenhaver G.P."/>
            <person name="Preuss D."/>
            <person name="Nierman W.C."/>
            <person name="White O."/>
            <person name="Eisen J.A."/>
            <person name="Salzberg S.L."/>
            <person name="Fraser C.M."/>
            <person name="Venter J.C."/>
        </authorList>
    </citation>
    <scope>NUCLEOTIDE SEQUENCE [LARGE SCALE GENOMIC DNA]</scope>
    <source>
        <strain>cv. Columbia</strain>
    </source>
</reference>
<reference key="3">
    <citation type="journal article" date="2017" name="Plant J.">
        <title>Araport11: a complete reannotation of the Arabidopsis thaliana reference genome.</title>
        <authorList>
            <person name="Cheng C.Y."/>
            <person name="Krishnakumar V."/>
            <person name="Chan A.P."/>
            <person name="Thibaud-Nissen F."/>
            <person name="Schobel S."/>
            <person name="Town C.D."/>
        </authorList>
    </citation>
    <scope>GENOME REANNOTATION</scope>
    <source>
        <strain>cv. Columbia</strain>
    </source>
</reference>
<reference key="4">
    <citation type="journal article" date="2006" name="Planta">
        <title>Evidence for a role of AtCAD 1 in lignification of elongating stems of Arabidopsis thaliana.</title>
        <authorList>
            <person name="Eudes A."/>
            <person name="Pollet B."/>
            <person name="Sibout R."/>
            <person name="Do C.-T."/>
            <person name="Seguin A."/>
            <person name="Lapierre C."/>
            <person name="Jouanin L."/>
        </authorList>
    </citation>
    <scope>TISSUE SPECIFICITY</scope>
</reference>
<reference key="5">
    <citation type="journal article" date="2007" name="Phytochemistry">
        <title>Expression of cinnamyl alcohol dehydrogenases and their putative homologues during Arabidopsis thaliana growth and development: lessons for database annotations?</title>
        <authorList>
            <person name="Kim S.-J."/>
            <person name="Kim K.-W."/>
            <person name="Cho M.-H."/>
            <person name="Franceschi V.R."/>
            <person name="Davin L.B."/>
            <person name="Lewis N.G."/>
        </authorList>
    </citation>
    <scope>TISSUE SPECIFICITY</scope>
</reference>
<dbReference type="EC" id="1.1.1.195" evidence="2"/>
<dbReference type="EMBL" id="AY302078">
    <property type="protein sequence ID" value="AAP59431.1"/>
    <property type="molecule type" value="mRNA"/>
</dbReference>
<dbReference type="EMBL" id="AC007019">
    <property type="protein sequence ID" value="AAD20406.1"/>
    <property type="molecule type" value="Genomic_DNA"/>
</dbReference>
<dbReference type="EMBL" id="CP002685">
    <property type="protein sequence ID" value="AEC07235.1"/>
    <property type="molecule type" value="Genomic_DNA"/>
</dbReference>
<dbReference type="PIR" id="D84606">
    <property type="entry name" value="D84606"/>
</dbReference>
<dbReference type="RefSeq" id="NP_179780.1">
    <property type="nucleotide sequence ID" value="NM_127758.3"/>
</dbReference>
<dbReference type="SMR" id="Q9SJ10"/>
<dbReference type="FunCoup" id="Q9SJ10">
    <property type="interactions" value="140"/>
</dbReference>
<dbReference type="STRING" id="3702.Q9SJ10"/>
<dbReference type="PaxDb" id="3702-AT2G21890.1"/>
<dbReference type="ProteomicsDB" id="240272"/>
<dbReference type="EnsemblPlants" id="AT2G21890.1">
    <property type="protein sequence ID" value="AT2G21890.1"/>
    <property type="gene ID" value="AT2G21890"/>
</dbReference>
<dbReference type="GeneID" id="816725"/>
<dbReference type="Gramene" id="AT2G21890.1">
    <property type="protein sequence ID" value="AT2G21890.1"/>
    <property type="gene ID" value="AT2G21890"/>
</dbReference>
<dbReference type="KEGG" id="ath:AT2G21890"/>
<dbReference type="Araport" id="AT2G21890"/>
<dbReference type="TAIR" id="AT2G21890">
    <property type="gene designation" value="CAD3"/>
</dbReference>
<dbReference type="eggNOG" id="KOG0023">
    <property type="taxonomic scope" value="Eukaryota"/>
</dbReference>
<dbReference type="HOGENOM" id="CLU_026673_20_2_1"/>
<dbReference type="InParanoid" id="Q9SJ10"/>
<dbReference type="OMA" id="DEKWARN"/>
<dbReference type="PhylomeDB" id="Q9SJ10"/>
<dbReference type="BioCyc" id="ARA:AT2G21890-MONOMER"/>
<dbReference type="SABIO-RK" id="Q9SJ10"/>
<dbReference type="UniPathway" id="UPA00711"/>
<dbReference type="PRO" id="PR:Q9SJ10"/>
<dbReference type="Proteomes" id="UP000006548">
    <property type="component" value="Chromosome 2"/>
</dbReference>
<dbReference type="GO" id="GO:0045551">
    <property type="term" value="F:cinnamyl-alcohol dehydrogenase activity"/>
    <property type="evidence" value="ECO:0000314"/>
    <property type="project" value="UniProtKB"/>
</dbReference>
<dbReference type="GO" id="GO:0050268">
    <property type="term" value="F:coniferyl-alcohol dehydrogenase activity"/>
    <property type="evidence" value="ECO:0007669"/>
    <property type="project" value="RHEA"/>
</dbReference>
<dbReference type="GO" id="GO:0008270">
    <property type="term" value="F:zinc ion binding"/>
    <property type="evidence" value="ECO:0007669"/>
    <property type="project" value="InterPro"/>
</dbReference>
<dbReference type="GO" id="GO:0009809">
    <property type="term" value="P:lignin biosynthetic process"/>
    <property type="evidence" value="ECO:0000305"/>
    <property type="project" value="UniProtKB"/>
</dbReference>
<dbReference type="CDD" id="cd05283">
    <property type="entry name" value="CAD1"/>
    <property type="match status" value="1"/>
</dbReference>
<dbReference type="FunFam" id="3.40.50.720:FF:000022">
    <property type="entry name" value="Cinnamyl alcohol dehydrogenase"/>
    <property type="match status" value="1"/>
</dbReference>
<dbReference type="FunFam" id="3.90.180.10:FF:000004">
    <property type="entry name" value="probable cinnamyl alcohol dehydrogenase"/>
    <property type="match status" value="1"/>
</dbReference>
<dbReference type="Gene3D" id="3.90.180.10">
    <property type="entry name" value="Medium-chain alcohol dehydrogenases, catalytic domain"/>
    <property type="match status" value="1"/>
</dbReference>
<dbReference type="Gene3D" id="3.40.50.720">
    <property type="entry name" value="NAD(P)-binding Rossmann-like Domain"/>
    <property type="match status" value="1"/>
</dbReference>
<dbReference type="InterPro" id="IPR013149">
    <property type="entry name" value="ADH-like_C"/>
</dbReference>
<dbReference type="InterPro" id="IPR013154">
    <property type="entry name" value="ADH-like_N"/>
</dbReference>
<dbReference type="InterPro" id="IPR002328">
    <property type="entry name" value="ADH_Zn_CS"/>
</dbReference>
<dbReference type="InterPro" id="IPR047109">
    <property type="entry name" value="CAD-like"/>
</dbReference>
<dbReference type="InterPro" id="IPR011032">
    <property type="entry name" value="GroES-like_sf"/>
</dbReference>
<dbReference type="InterPro" id="IPR036291">
    <property type="entry name" value="NAD(P)-bd_dom_sf"/>
</dbReference>
<dbReference type="InterPro" id="IPR020843">
    <property type="entry name" value="PKS_ER"/>
</dbReference>
<dbReference type="PANTHER" id="PTHR42683">
    <property type="entry name" value="ALDEHYDE REDUCTASE"/>
    <property type="match status" value="1"/>
</dbReference>
<dbReference type="Pfam" id="PF08240">
    <property type="entry name" value="ADH_N"/>
    <property type="match status" value="1"/>
</dbReference>
<dbReference type="Pfam" id="PF00107">
    <property type="entry name" value="ADH_zinc_N"/>
    <property type="match status" value="1"/>
</dbReference>
<dbReference type="SMART" id="SM00829">
    <property type="entry name" value="PKS_ER"/>
    <property type="match status" value="1"/>
</dbReference>
<dbReference type="SUPFAM" id="SSF50129">
    <property type="entry name" value="GroES-like"/>
    <property type="match status" value="1"/>
</dbReference>
<dbReference type="SUPFAM" id="SSF51735">
    <property type="entry name" value="NAD(P)-binding Rossmann-fold domains"/>
    <property type="match status" value="1"/>
</dbReference>
<dbReference type="PROSITE" id="PS00059">
    <property type="entry name" value="ADH_ZINC"/>
    <property type="match status" value="1"/>
</dbReference>
<evidence type="ECO:0000250" key="1">
    <source>
        <dbReference type="UniProtKB" id="O49482"/>
    </source>
</evidence>
<evidence type="ECO:0000269" key="2">
    <source>
    </source>
</evidence>
<evidence type="ECO:0000269" key="3">
    <source>
    </source>
</evidence>
<evidence type="ECO:0000269" key="4">
    <source>
    </source>
</evidence>
<evidence type="ECO:0000303" key="5">
    <source>
    </source>
</evidence>
<evidence type="ECO:0000303" key="6">
    <source>
    </source>
</evidence>
<evidence type="ECO:0000305" key="7"/>
<evidence type="ECO:0000312" key="8">
    <source>
        <dbReference type="Araport" id="AT2G21890"/>
    </source>
</evidence>
<evidence type="ECO:0000312" key="9">
    <source>
        <dbReference type="EMBL" id="AAD20406.1"/>
    </source>
</evidence>
<name>CADH3_ARATH</name>
<proteinExistence type="evidence at protein level"/>